<proteinExistence type="inferred from homology"/>
<organism>
    <name type="scientific">Escherichia coli (strain K12 / MC4100 / BW2952)</name>
    <dbReference type="NCBI Taxonomy" id="595496"/>
    <lineage>
        <taxon>Bacteria</taxon>
        <taxon>Pseudomonadati</taxon>
        <taxon>Pseudomonadota</taxon>
        <taxon>Gammaproteobacteria</taxon>
        <taxon>Enterobacterales</taxon>
        <taxon>Enterobacteriaceae</taxon>
        <taxon>Escherichia</taxon>
    </lineage>
</organism>
<protein>
    <recommendedName>
        <fullName>Formyl-CoA:oxalate CoA-transferase</fullName>
        <shortName>FCOCT</shortName>
        <ecNumber evidence="2">2.8.3.16</ecNumber>
    </recommendedName>
    <alternativeName>
        <fullName evidence="2">Formyl-coenzyme A transferase</fullName>
        <shortName evidence="2">Formyl-CoA transferase</shortName>
    </alternativeName>
</protein>
<gene>
    <name evidence="2" type="primary">frc</name>
    <name type="ordered locus">BWG_2142</name>
</gene>
<evidence type="ECO:0000250" key="1"/>
<evidence type="ECO:0000255" key="2">
    <source>
        <dbReference type="HAMAP-Rule" id="MF_00742"/>
    </source>
</evidence>
<feature type="chain" id="PRO_1000212833" description="Formyl-CoA:oxalate CoA-transferase">
    <location>
        <begin position="1"/>
        <end position="416"/>
    </location>
</feature>
<feature type="active site" description="Nucleophile" evidence="2">
    <location>
        <position position="169"/>
    </location>
</feature>
<feature type="binding site" evidence="1">
    <location>
        <begin position="17"/>
        <end position="18"/>
    </location>
    <ligand>
        <name>CoA</name>
        <dbReference type="ChEBI" id="CHEBI:57287"/>
    </ligand>
</feature>
<feature type="binding site" evidence="2">
    <location>
        <position position="38"/>
    </location>
    <ligand>
        <name>CoA</name>
        <dbReference type="ChEBI" id="CHEBI:57287"/>
    </ligand>
</feature>
<feature type="binding site" evidence="1">
    <location>
        <begin position="72"/>
        <end position="75"/>
    </location>
    <ligand>
        <name>CoA</name>
        <dbReference type="ChEBI" id="CHEBI:57287"/>
    </ligand>
</feature>
<feature type="binding site" evidence="1">
    <location>
        <begin position="96"/>
        <end position="98"/>
    </location>
    <ligand>
        <name>CoA</name>
        <dbReference type="ChEBI" id="CHEBI:57287"/>
    </ligand>
</feature>
<feature type="binding site" evidence="2">
    <location>
        <position position="104"/>
    </location>
    <ligand>
        <name>CoA</name>
        <dbReference type="ChEBI" id="CHEBI:57287"/>
    </ligand>
</feature>
<feature type="binding site" evidence="1">
    <location>
        <begin position="137"/>
        <end position="140"/>
    </location>
    <ligand>
        <name>CoA</name>
        <dbReference type="ChEBI" id="CHEBI:57287"/>
    </ligand>
</feature>
<feature type="binding site" evidence="1">
    <location>
        <begin position="248"/>
        <end position="250"/>
    </location>
    <ligand>
        <name>substrate</name>
    </ligand>
</feature>
<feature type="binding site" evidence="1">
    <location>
        <begin position="273"/>
        <end position="275"/>
    </location>
    <ligand>
        <name>CoA</name>
        <dbReference type="ChEBI" id="CHEBI:57287"/>
    </ligand>
</feature>
<sequence>MSTPLQGIKVLDFTGVQSGPSCTQMLAWFGADVIKIERPGVGDVTRHQLRDIPDIDALYFTMLNSNKRSIELNTKTAEGKEVMEKLIREADILVENFHPGAIDHMGFTWEHIQEINPRLIFGSIKGFDECSPYVNVKAYENVAQAAGGAASTTGFWDGPPLVSAAALGDSNTGMHLLIGLLAALLHREKTGRGQRVTMSMQDAVLNLCRVKLRDQQRLDKLGYLEEYPQYPNGTFGDAVPRGGNAGGGGQPGWILKCKGWETDPNAYIYFTIQEQNWENTCKAIGKPEWITDPAYSTAHARQPHIFDIFAEIEKYTVTIDKHEAVAYLTQFDIPCAPVLSMKEISLDPSLRQSGSVVEVEQPLRGKYLTVGCPMKFSAFTPDIKAAPLLGEHTAAVLQELGYSDDEIAAMKQNHAI</sequence>
<comment type="function">
    <text evidence="1">Involved in the catabolism of oxalate and in the adapatation to low pH via the induction of the oxalate-dependent acid tolerance response (ATR). Catalyzes the transfer of the CoA moiety from formyl-CoA to oxalate (By similarity).</text>
</comment>
<comment type="catalytic activity">
    <reaction evidence="2">
        <text>formyl-CoA + oxalate = oxalyl-CoA + formate</text>
        <dbReference type="Rhea" id="RHEA:16545"/>
        <dbReference type="ChEBI" id="CHEBI:15740"/>
        <dbReference type="ChEBI" id="CHEBI:30623"/>
        <dbReference type="ChEBI" id="CHEBI:57376"/>
        <dbReference type="ChEBI" id="CHEBI:57388"/>
        <dbReference type="EC" id="2.8.3.16"/>
    </reaction>
</comment>
<comment type="pathway">
    <text evidence="2">Metabolic intermediate degradation; oxalate degradation; CO(2) and formate from oxalate: step 1/2.</text>
</comment>
<comment type="subunit">
    <text evidence="2">Homodimer.</text>
</comment>
<comment type="similarity">
    <text evidence="2">Belongs to the CoA-transferase III family. Frc subfamily.</text>
</comment>
<dbReference type="EC" id="2.8.3.16" evidence="2"/>
<dbReference type="EMBL" id="CP001396">
    <property type="protein sequence ID" value="ACR63138.1"/>
    <property type="molecule type" value="Genomic_DNA"/>
</dbReference>
<dbReference type="RefSeq" id="WP_000106759.1">
    <property type="nucleotide sequence ID" value="NC_012759.1"/>
</dbReference>
<dbReference type="SMR" id="C4ZVR1"/>
<dbReference type="GeneID" id="75202557"/>
<dbReference type="KEGG" id="ebw:BWG_2142"/>
<dbReference type="HOGENOM" id="CLU_033975_2_1_6"/>
<dbReference type="UniPathway" id="UPA00540">
    <property type="reaction ID" value="UER00598"/>
</dbReference>
<dbReference type="GO" id="GO:0033608">
    <property type="term" value="F:formyl-CoA transferase activity"/>
    <property type="evidence" value="ECO:0007669"/>
    <property type="project" value="UniProtKB-EC"/>
</dbReference>
<dbReference type="GO" id="GO:0033611">
    <property type="term" value="P:oxalate catabolic process"/>
    <property type="evidence" value="ECO:0007669"/>
    <property type="project" value="UniProtKB-UniRule"/>
</dbReference>
<dbReference type="Gene3D" id="3.40.50.10540">
    <property type="entry name" value="Crotonobetainyl-coa:carnitine coa-transferase, domain 1"/>
    <property type="match status" value="1"/>
</dbReference>
<dbReference type="Gene3D" id="3.30.1540.10">
    <property type="entry name" value="formyl-coa transferase, domain 3"/>
    <property type="match status" value="1"/>
</dbReference>
<dbReference type="HAMAP" id="MF_00742">
    <property type="entry name" value="Formyl_CoA_transfer"/>
    <property type="match status" value="1"/>
</dbReference>
<dbReference type="InterPro" id="IPR050483">
    <property type="entry name" value="CoA-transferase_III_domain"/>
</dbReference>
<dbReference type="InterPro" id="IPR003673">
    <property type="entry name" value="CoA-Trfase_fam_III"/>
</dbReference>
<dbReference type="InterPro" id="IPR044855">
    <property type="entry name" value="CoA-Trfase_III_dom3_sf"/>
</dbReference>
<dbReference type="InterPro" id="IPR023606">
    <property type="entry name" value="CoA-Trfase_III_dom_1_sf"/>
</dbReference>
<dbReference type="InterPro" id="IPR017659">
    <property type="entry name" value="Formyl_CoA_transfer"/>
</dbReference>
<dbReference type="NCBIfam" id="TIGR03253">
    <property type="entry name" value="oxalate_frc"/>
    <property type="match status" value="1"/>
</dbReference>
<dbReference type="NCBIfam" id="NF003809">
    <property type="entry name" value="PRK05398.1"/>
    <property type="match status" value="1"/>
</dbReference>
<dbReference type="PANTHER" id="PTHR48207">
    <property type="entry name" value="SUCCINATE--HYDROXYMETHYLGLUTARATE COA-TRANSFERASE"/>
    <property type="match status" value="1"/>
</dbReference>
<dbReference type="PANTHER" id="PTHR48207:SF3">
    <property type="entry name" value="SUCCINATE--HYDROXYMETHYLGLUTARATE COA-TRANSFERASE"/>
    <property type="match status" value="1"/>
</dbReference>
<dbReference type="Pfam" id="PF02515">
    <property type="entry name" value="CoA_transf_3"/>
    <property type="match status" value="1"/>
</dbReference>
<dbReference type="SUPFAM" id="SSF89796">
    <property type="entry name" value="CoA-transferase family III (CaiB/BaiF)"/>
    <property type="match status" value="1"/>
</dbReference>
<accession>C4ZVR1</accession>
<reference key="1">
    <citation type="journal article" date="2009" name="J. Bacteriol.">
        <title>Genomic sequencing reveals regulatory mutations and recombinational events in the widely used MC4100 lineage of Escherichia coli K-12.</title>
        <authorList>
            <person name="Ferenci T."/>
            <person name="Zhou Z."/>
            <person name="Betteridge T."/>
            <person name="Ren Y."/>
            <person name="Liu Y."/>
            <person name="Feng L."/>
            <person name="Reeves P.R."/>
            <person name="Wang L."/>
        </authorList>
    </citation>
    <scope>NUCLEOTIDE SEQUENCE [LARGE SCALE GENOMIC DNA]</scope>
    <source>
        <strain>K12 / MC4100 / BW2952</strain>
    </source>
</reference>
<keyword id="KW-0808">Transferase</keyword>
<name>FCTA_ECOBW</name>